<name>P4K2A_RAT</name>
<feature type="chain" id="PRO_0000285160" description="Phosphatidylinositol 4-kinase type 2-alpha">
    <location>
        <begin position="1"/>
        <end position="478"/>
    </location>
</feature>
<feature type="domain" description="PI3K/PI4K catalytic" evidence="3">
    <location>
        <begin position="123"/>
        <end position="452"/>
    </location>
</feature>
<feature type="region of interest" description="Disordered" evidence="4">
    <location>
        <begin position="1"/>
        <end position="57"/>
    </location>
</feature>
<feature type="region of interest" description="G-loop" evidence="3">
    <location>
        <begin position="129"/>
        <end position="135"/>
    </location>
</feature>
<feature type="region of interest" description="Important for substrate binding" evidence="2">
    <location>
        <begin position="156"/>
        <end position="158"/>
    </location>
</feature>
<feature type="region of interest" description="Important for interaction with membranes" evidence="2">
    <location>
        <begin position="164"/>
        <end position="177"/>
    </location>
</feature>
<feature type="region of interest" description="Important for interaction with membranes" evidence="2">
    <location>
        <begin position="267"/>
        <end position="275"/>
    </location>
</feature>
<feature type="region of interest" description="Catalytic loop" evidence="3">
    <location>
        <begin position="304"/>
        <end position="312"/>
    </location>
</feature>
<feature type="region of interest" description="Activation loop" evidence="3">
    <location>
        <begin position="343"/>
        <end position="363"/>
    </location>
</feature>
<feature type="region of interest" description="Important for interaction with membranes" evidence="2">
    <location>
        <begin position="358"/>
        <end position="367"/>
    </location>
</feature>
<feature type="compositionally biased region" description="Low complexity" evidence="4">
    <location>
        <begin position="31"/>
        <end position="44"/>
    </location>
</feature>
<feature type="binding site" evidence="2">
    <location>
        <begin position="130"/>
        <end position="136"/>
    </location>
    <ligand>
        <name>ATP</name>
        <dbReference type="ChEBI" id="CHEBI:30616"/>
    </ligand>
</feature>
<feature type="binding site" evidence="2">
    <location>
        <position position="151"/>
    </location>
    <ligand>
        <name>ATP</name>
        <dbReference type="ChEBI" id="CHEBI:30616"/>
    </ligand>
</feature>
<feature type="binding site" evidence="2">
    <location>
        <begin position="260"/>
        <end position="263"/>
    </location>
    <ligand>
        <name>ATP</name>
        <dbReference type="ChEBI" id="CHEBI:30616"/>
    </ligand>
</feature>
<feature type="binding site" evidence="2">
    <location>
        <position position="345"/>
    </location>
    <ligand>
        <name>ATP</name>
        <dbReference type="ChEBI" id="CHEBI:30616"/>
    </ligand>
</feature>
<feature type="modified residue" description="N-acetylmethionine" evidence="2">
    <location>
        <position position="1"/>
    </location>
</feature>
<feature type="modified residue" description="Phosphoserine" evidence="10">
    <location>
        <position position="5"/>
    </location>
</feature>
<feature type="modified residue" description="Phosphoserine" evidence="10">
    <location>
        <position position="9"/>
    </location>
</feature>
<feature type="modified residue" description="Phosphoserine" evidence="2">
    <location>
        <position position="43"/>
    </location>
</feature>
<feature type="modified residue" description="Phosphoserine" evidence="9 10">
    <location>
        <position position="46"/>
    </location>
</feature>
<feature type="modified residue" description="Phosphoserine" evidence="9">
    <location>
        <position position="50"/>
    </location>
</feature>
<feature type="modified residue" description="Phosphoserine" evidence="10">
    <location>
        <position position="461"/>
    </location>
</feature>
<feature type="lipid moiety-binding region" description="S-palmitoyl cysteine" evidence="2">
    <location>
        <position position="173"/>
    </location>
</feature>
<feature type="lipid moiety-binding region" description="S-palmitoyl cysteine" evidence="2">
    <location>
        <position position="174"/>
    </location>
</feature>
<feature type="lipid moiety-binding region" description="S-palmitoyl cysteine" evidence="2">
    <location>
        <position position="176"/>
    </location>
</feature>
<feature type="lipid moiety-binding region" description="S-palmitoyl cysteine" evidence="2">
    <location>
        <position position="177"/>
    </location>
</feature>
<feature type="mutagenesis site" description="Reduces targeting to synaptic vesicles and neurite tips; when associated with A-61." evidence="7">
    <original>L</original>
    <variation>A</variation>
    <location>
        <position position="60"/>
    </location>
</feature>
<feature type="mutagenesis site" description="Reduces targeting to synaptic vesicles and neurite tips; when associated with A-60." evidence="7">
    <original>L</original>
    <variation>A</variation>
    <location>
        <position position="61"/>
    </location>
</feature>
<reference key="1">
    <citation type="journal article" date="2001" name="J. Biol. Chem.">
        <title>A novel family of phosphatidylinositol 4-kinases conserved from yeast to humans.</title>
        <authorList>
            <person name="Barylko B."/>
            <person name="Gerber S.H."/>
            <person name="Binns D.D."/>
            <person name="Grichine N."/>
            <person name="Khvotchev M."/>
            <person name="Suedhof T.C."/>
            <person name="Albanesi J.P."/>
        </authorList>
    </citation>
    <scope>NUCLEOTIDE SEQUENCE [MRNA]</scope>
    <scope>FUNCTION</scope>
    <scope>CATALYTIC ACTIVITY</scope>
    <scope>SUBCELLULAR LOCATION</scope>
    <scope>PALMITOYLATION</scope>
    <source>
        <tissue>Brain</tissue>
    </source>
</reference>
<reference key="2">
    <citation type="journal article" date="2006" name="Proc. Natl. Acad. Sci. U.S.A.">
        <title>Quantitative phosphoproteomics of vasopressin-sensitive renal cells: regulation of aquaporin-2 phosphorylation at two sites.</title>
        <authorList>
            <person name="Hoffert J.D."/>
            <person name="Pisitkun T."/>
            <person name="Wang G."/>
            <person name="Shen R.-F."/>
            <person name="Knepper M.A."/>
        </authorList>
    </citation>
    <scope>PHOSPHORYLATION [LARGE SCALE ANALYSIS] AT SER-46 AND SER-50</scope>
    <scope>IDENTIFICATION BY MASS SPECTROMETRY [LARGE SCALE ANALYSIS]</scope>
</reference>
<reference key="3">
    <citation type="journal article" date="2009" name="Proc. Natl. Acad. Sci. U.S.A.">
        <title>Loss of phosphatidylinositol 4-kinase 2alpha activity causes late onset degeneration of spinal cord axons.</title>
        <authorList>
            <person name="Simons J.P."/>
            <person name="Al-Shawi R."/>
            <person name="Minogue S."/>
            <person name="Waugh M.G."/>
            <person name="Wiedemann C."/>
            <person name="Evangelou S."/>
            <person name="Loesch A."/>
            <person name="Sihra T.S."/>
            <person name="King R."/>
            <person name="Warner T.T."/>
            <person name="Hsuan J.J."/>
        </authorList>
    </citation>
    <scope>TISSUE SPECIFICITY</scope>
</reference>
<reference key="4">
    <citation type="journal article" date="2011" name="Mol. Biol. Cell">
        <title>The schizophrenia susceptibility factor dysbindin and its associated complex sort cargoes from cell bodies to the synapse.</title>
        <authorList>
            <person name="Larimore J."/>
            <person name="Tornieri K."/>
            <person name="Ryder P.V."/>
            <person name="Gokhale A."/>
            <person name="Zlatic S.A."/>
            <person name="Craige B."/>
            <person name="Lee J.D."/>
            <person name="Talbot K."/>
            <person name="Pare J.F."/>
            <person name="Smith Y."/>
            <person name="Faundez V."/>
        </authorList>
    </citation>
    <scope>SUBCELLULAR LOCATION</scope>
    <scope>MUTAGENESIS OF LEU-60 AND LEU-61</scope>
    <scope>SUBUNIT</scope>
    <scope>INTERACTION WITH BLOC1S5 AND DTNBP1</scope>
</reference>
<reference key="5">
    <citation type="journal article" date="2012" name="Nat. Commun.">
        <title>Quantitative maps of protein phosphorylation sites across 14 different rat organs and tissues.</title>
        <authorList>
            <person name="Lundby A."/>
            <person name="Secher A."/>
            <person name="Lage K."/>
            <person name="Nordsborg N.B."/>
            <person name="Dmytriyev A."/>
            <person name="Lundby C."/>
            <person name="Olsen J.V."/>
        </authorList>
    </citation>
    <scope>PHOSPHORYLATION [LARGE SCALE ANALYSIS] AT SER-5; SER-9; SER-46 AND SER-461</scope>
    <scope>IDENTIFICATION BY MASS SPECTROMETRY [LARGE SCALE ANALYSIS]</scope>
</reference>
<evidence type="ECO:0000250" key="1">
    <source>
        <dbReference type="UniProtKB" id="Q2TBE6"/>
    </source>
</evidence>
<evidence type="ECO:0000250" key="2">
    <source>
        <dbReference type="UniProtKB" id="Q9BTU6"/>
    </source>
</evidence>
<evidence type="ECO:0000255" key="3">
    <source>
        <dbReference type="PROSITE-ProRule" id="PRU00269"/>
    </source>
</evidence>
<evidence type="ECO:0000256" key="4">
    <source>
        <dbReference type="SAM" id="MobiDB-lite"/>
    </source>
</evidence>
<evidence type="ECO:0000269" key="5">
    <source>
    </source>
</evidence>
<evidence type="ECO:0000269" key="6">
    <source>
    </source>
</evidence>
<evidence type="ECO:0000269" key="7">
    <source>
    </source>
</evidence>
<evidence type="ECO:0000305" key="8"/>
<evidence type="ECO:0007744" key="9">
    <source>
    </source>
</evidence>
<evidence type="ECO:0007744" key="10">
    <source>
    </source>
</evidence>
<proteinExistence type="evidence at protein level"/>
<accession>Q99M64</accession>
<protein>
    <recommendedName>
        <fullName>Phosphatidylinositol 4-kinase type 2-alpha</fullName>
        <ecNumber evidence="5">2.7.1.67</ecNumber>
    </recommendedName>
    <alternativeName>
        <fullName>55 kDa type II phosphatidylinositol 4-kinase</fullName>
    </alternativeName>
    <alternativeName>
        <fullName>Phosphatidylinositol 4-kinase type II-alpha</fullName>
    </alternativeName>
</protein>
<dbReference type="EC" id="2.7.1.67" evidence="5"/>
<dbReference type="EMBL" id="AY029199">
    <property type="protein sequence ID" value="AAK33002.1"/>
    <property type="molecule type" value="mRNA"/>
</dbReference>
<dbReference type="RefSeq" id="NP_446187.1">
    <property type="nucleotide sequence ID" value="NM_053735.2"/>
</dbReference>
<dbReference type="RefSeq" id="XP_038964019.1">
    <property type="nucleotide sequence ID" value="XM_039108091.2"/>
</dbReference>
<dbReference type="SMR" id="Q99M64"/>
<dbReference type="BioGRID" id="250373">
    <property type="interactions" value="1"/>
</dbReference>
<dbReference type="FunCoup" id="Q99M64">
    <property type="interactions" value="3169"/>
</dbReference>
<dbReference type="IntAct" id="Q99M64">
    <property type="interactions" value="3"/>
</dbReference>
<dbReference type="MINT" id="Q99M64"/>
<dbReference type="STRING" id="10116.ENSRNOP00000019874"/>
<dbReference type="iPTMnet" id="Q99M64"/>
<dbReference type="PhosphoSitePlus" id="Q99M64"/>
<dbReference type="SwissPalm" id="Q99M64"/>
<dbReference type="jPOST" id="Q99M64"/>
<dbReference type="PaxDb" id="10116-ENSRNOP00000019874"/>
<dbReference type="Ensembl" id="ENSRNOT00000019874.3">
    <property type="protein sequence ID" value="ENSRNOP00000019874.1"/>
    <property type="gene ID" value="ENSRNOG00000014675.3"/>
</dbReference>
<dbReference type="GeneID" id="114554"/>
<dbReference type="KEGG" id="rno:114554"/>
<dbReference type="UCSC" id="RGD:620485">
    <property type="organism name" value="rat"/>
</dbReference>
<dbReference type="AGR" id="RGD:620485"/>
<dbReference type="CTD" id="55361"/>
<dbReference type="RGD" id="620485">
    <property type="gene designation" value="Pi4k2a"/>
</dbReference>
<dbReference type="eggNOG" id="KOG2381">
    <property type="taxonomic scope" value="Eukaryota"/>
</dbReference>
<dbReference type="GeneTree" id="ENSGT00390000010434"/>
<dbReference type="HOGENOM" id="CLU_032516_2_0_1"/>
<dbReference type="InParanoid" id="Q99M64"/>
<dbReference type="OMA" id="IKCDCPL"/>
<dbReference type="OrthoDB" id="3349449at2759"/>
<dbReference type="PhylomeDB" id="Q99M64"/>
<dbReference type="TreeFam" id="TF314740"/>
<dbReference type="Reactome" id="R-RNO-1660499">
    <property type="pathway name" value="Synthesis of PIPs at the plasma membrane"/>
</dbReference>
<dbReference type="Reactome" id="R-RNO-1660514">
    <property type="pathway name" value="Synthesis of PIPs at the Golgi membrane"/>
</dbReference>
<dbReference type="Reactome" id="R-RNO-1660516">
    <property type="pathway name" value="Synthesis of PIPs at the early endosome membrane"/>
</dbReference>
<dbReference type="PRO" id="PR:Q99M64"/>
<dbReference type="Proteomes" id="UP000002494">
    <property type="component" value="Chromosome 1"/>
</dbReference>
<dbReference type="Bgee" id="ENSRNOG00000014675">
    <property type="expression patterns" value="Expressed in cerebellum and 19 other cell types or tissues"/>
</dbReference>
<dbReference type="GO" id="GO:0031083">
    <property type="term" value="C:BLOC-1 complex"/>
    <property type="evidence" value="ECO:0000266"/>
    <property type="project" value="RGD"/>
</dbReference>
<dbReference type="GO" id="GO:0031410">
    <property type="term" value="C:cytoplasmic vesicle"/>
    <property type="evidence" value="ECO:0000314"/>
    <property type="project" value="UniProtKB"/>
</dbReference>
<dbReference type="GO" id="GO:0030425">
    <property type="term" value="C:dendrite"/>
    <property type="evidence" value="ECO:0000250"/>
    <property type="project" value="UniProtKB"/>
</dbReference>
<dbReference type="GO" id="GO:0031901">
    <property type="term" value="C:early endosome membrane"/>
    <property type="evidence" value="ECO:0000314"/>
    <property type="project" value="RGD"/>
</dbReference>
<dbReference type="GO" id="GO:0005768">
    <property type="term" value="C:endosome"/>
    <property type="evidence" value="ECO:0000314"/>
    <property type="project" value="UniProtKB"/>
</dbReference>
<dbReference type="GO" id="GO:0010008">
    <property type="term" value="C:endosome membrane"/>
    <property type="evidence" value="ECO:0000266"/>
    <property type="project" value="RGD"/>
</dbReference>
<dbReference type="GO" id="GO:0070382">
    <property type="term" value="C:exocytic vesicle"/>
    <property type="evidence" value="ECO:0000314"/>
    <property type="project" value="RGD"/>
</dbReference>
<dbReference type="GO" id="GO:0098978">
    <property type="term" value="C:glutamatergic synapse"/>
    <property type="evidence" value="ECO:0000266"/>
    <property type="project" value="RGD"/>
</dbReference>
<dbReference type="GO" id="GO:0000139">
    <property type="term" value="C:Golgi membrane"/>
    <property type="evidence" value="ECO:0000266"/>
    <property type="project" value="RGD"/>
</dbReference>
<dbReference type="GO" id="GO:0035838">
    <property type="term" value="C:growing cell tip"/>
    <property type="evidence" value="ECO:0000314"/>
    <property type="project" value="UniProtKB"/>
</dbReference>
<dbReference type="GO" id="GO:0016020">
    <property type="term" value="C:membrane"/>
    <property type="evidence" value="ECO:0000250"/>
    <property type="project" value="UniProtKB"/>
</dbReference>
<dbReference type="GO" id="GO:0045121">
    <property type="term" value="C:membrane raft"/>
    <property type="evidence" value="ECO:0000266"/>
    <property type="project" value="RGD"/>
</dbReference>
<dbReference type="GO" id="GO:0005739">
    <property type="term" value="C:mitochondrion"/>
    <property type="evidence" value="ECO:0000250"/>
    <property type="project" value="UniProtKB"/>
</dbReference>
<dbReference type="GO" id="GO:0043005">
    <property type="term" value="C:neuron projection"/>
    <property type="evidence" value="ECO:0000314"/>
    <property type="project" value="UniProtKB"/>
</dbReference>
<dbReference type="GO" id="GO:0043025">
    <property type="term" value="C:neuronal cell body"/>
    <property type="evidence" value="ECO:0000314"/>
    <property type="project" value="UniProtKB"/>
</dbReference>
<dbReference type="GO" id="GO:0043204">
    <property type="term" value="C:perikaryon"/>
    <property type="evidence" value="ECO:0000314"/>
    <property type="project" value="RGD"/>
</dbReference>
<dbReference type="GO" id="GO:0005886">
    <property type="term" value="C:plasma membrane"/>
    <property type="evidence" value="ECO:0000250"/>
    <property type="project" value="UniProtKB"/>
</dbReference>
<dbReference type="GO" id="GO:0048786">
    <property type="term" value="C:presynaptic active zone"/>
    <property type="evidence" value="ECO:0000266"/>
    <property type="project" value="RGD"/>
</dbReference>
<dbReference type="GO" id="GO:0042734">
    <property type="term" value="C:presynaptic membrane"/>
    <property type="evidence" value="ECO:0000250"/>
    <property type="project" value="UniProtKB"/>
</dbReference>
<dbReference type="GO" id="GO:0032991">
    <property type="term" value="C:protein-containing complex"/>
    <property type="evidence" value="ECO:0000314"/>
    <property type="project" value="RGD"/>
</dbReference>
<dbReference type="GO" id="GO:0030672">
    <property type="term" value="C:synaptic vesicle membrane"/>
    <property type="evidence" value="ECO:0000314"/>
    <property type="project" value="RGD"/>
</dbReference>
<dbReference type="GO" id="GO:0005802">
    <property type="term" value="C:trans-Golgi network"/>
    <property type="evidence" value="ECO:0000318"/>
    <property type="project" value="GO_Central"/>
</dbReference>
<dbReference type="GO" id="GO:0004430">
    <property type="term" value="F:1-phosphatidylinositol 4-kinase activity"/>
    <property type="evidence" value="ECO:0000314"/>
    <property type="project" value="RGD"/>
</dbReference>
<dbReference type="GO" id="GO:0035651">
    <property type="term" value="F:AP-3 adaptor complex binding"/>
    <property type="evidence" value="ECO:0000250"/>
    <property type="project" value="UniProtKB"/>
</dbReference>
<dbReference type="GO" id="GO:0005524">
    <property type="term" value="F:ATP binding"/>
    <property type="evidence" value="ECO:0000250"/>
    <property type="project" value="UniProtKB"/>
</dbReference>
<dbReference type="GO" id="GO:0044877">
    <property type="term" value="F:protein-containing complex binding"/>
    <property type="evidence" value="ECO:0000314"/>
    <property type="project" value="RGD"/>
</dbReference>
<dbReference type="GO" id="GO:0002561">
    <property type="term" value="P:basophil degranulation"/>
    <property type="evidence" value="ECO:0000315"/>
    <property type="project" value="RGD"/>
</dbReference>
<dbReference type="GO" id="GO:0007032">
    <property type="term" value="P:endosome organization"/>
    <property type="evidence" value="ECO:0000318"/>
    <property type="project" value="GO_Central"/>
</dbReference>
<dbReference type="GO" id="GO:0007030">
    <property type="term" value="P:Golgi organization"/>
    <property type="evidence" value="ECO:0000318"/>
    <property type="project" value="GO_Central"/>
</dbReference>
<dbReference type="GO" id="GO:0006661">
    <property type="term" value="P:phosphatidylinositol biosynthetic process"/>
    <property type="evidence" value="ECO:0000250"/>
    <property type="project" value="UniProtKB"/>
</dbReference>
<dbReference type="GO" id="GO:0046854">
    <property type="term" value="P:phosphatidylinositol phosphate biosynthetic process"/>
    <property type="evidence" value="ECO:0000266"/>
    <property type="project" value="RGD"/>
</dbReference>
<dbReference type="InterPro" id="IPR039756">
    <property type="entry name" value="Lsb6/PI4K2"/>
</dbReference>
<dbReference type="InterPro" id="IPR000403">
    <property type="entry name" value="PI3/4_kinase_cat_dom"/>
</dbReference>
<dbReference type="PANTHER" id="PTHR12865:SF7">
    <property type="entry name" value="PHOSPHATIDYLINOSITOL 4-KINASE TYPE 2-ALPHA"/>
    <property type="match status" value="1"/>
</dbReference>
<dbReference type="PANTHER" id="PTHR12865">
    <property type="entry name" value="PHOSPHATIDYLINOSITOL 4-KINASE TYPE-II"/>
    <property type="match status" value="1"/>
</dbReference>
<dbReference type="Pfam" id="PF00454">
    <property type="entry name" value="PI3_PI4_kinase"/>
    <property type="match status" value="1"/>
</dbReference>
<dbReference type="SUPFAM" id="SSF56399">
    <property type="entry name" value="ADP-ribosylation"/>
    <property type="match status" value="1"/>
</dbReference>
<dbReference type="PROSITE" id="PS50290">
    <property type="entry name" value="PI3_4_KINASE_3"/>
    <property type="match status" value="1"/>
</dbReference>
<keyword id="KW-0007">Acetylation</keyword>
<keyword id="KW-0067">ATP-binding</keyword>
<keyword id="KW-1003">Cell membrane</keyword>
<keyword id="KW-0966">Cell projection</keyword>
<keyword id="KW-0968">Cytoplasmic vesicle</keyword>
<keyword id="KW-0967">Endosome</keyword>
<keyword id="KW-0333">Golgi apparatus</keyword>
<keyword id="KW-0418">Kinase</keyword>
<keyword id="KW-0443">Lipid metabolism</keyword>
<keyword id="KW-0449">Lipoprotein</keyword>
<keyword id="KW-0472">Membrane</keyword>
<keyword id="KW-0496">Mitochondrion</keyword>
<keyword id="KW-0547">Nucleotide-binding</keyword>
<keyword id="KW-0564">Palmitate</keyword>
<keyword id="KW-0597">Phosphoprotein</keyword>
<keyword id="KW-1185">Reference proteome</keyword>
<keyword id="KW-0770">Synapse</keyword>
<keyword id="KW-0771">Synaptosome</keyword>
<keyword id="KW-0808">Transferase</keyword>
<keyword id="KW-0832">Ubl conjugation</keyword>
<sequence>MDETSPLVSPERAQPPEYTFPSVSGAHFPQVPGGAVRVAAAGSGPSPPCSPGHDRERQPLLDRARGAAAQGQTHTVAAQAQALAAQAAVAVHAVQTHRERNDFPEDPEFEVVVRQAEIAIECSIYPERIYQGSSGSYFVKDSQGRIIAVFKPKNEEPYGNLNPKWTKWLQKLCCPCCFGRDCLVLNQGYLSEAGASLVDQKLELNIVPRTKVVYLASETFNYSAIDRVKSRGKRLALEKVPKVGQRFNRIGLPPKVGSFQLFVEGYKDADYWLRRFEAEPLPENTNRQLLLQFERLVVLDYIIRNTDRGNDNWLIKYDYPMDNPNCRDTDWVMVREPVIKVAAIDNGLAFPLKHPDSWRAYPFYWAWLPQAKVPFSQEIKDLILPKISDPNFVKDLEEDLYELFKKDPGFDRGQFHKQIAVMRGQILNLTQALKDNKSPLHLVQMPPVIVETARSHQRSSSESYTQSFQSRKPFFSWW</sequence>
<organism>
    <name type="scientific">Rattus norvegicus</name>
    <name type="common">Rat</name>
    <dbReference type="NCBI Taxonomy" id="10116"/>
    <lineage>
        <taxon>Eukaryota</taxon>
        <taxon>Metazoa</taxon>
        <taxon>Chordata</taxon>
        <taxon>Craniata</taxon>
        <taxon>Vertebrata</taxon>
        <taxon>Euteleostomi</taxon>
        <taxon>Mammalia</taxon>
        <taxon>Eutheria</taxon>
        <taxon>Euarchontoglires</taxon>
        <taxon>Glires</taxon>
        <taxon>Rodentia</taxon>
        <taxon>Myomorpha</taxon>
        <taxon>Muroidea</taxon>
        <taxon>Muridae</taxon>
        <taxon>Murinae</taxon>
        <taxon>Rattus</taxon>
    </lineage>
</organism>
<comment type="function">
    <text evidence="5 8">Membrane-bound phosphatidylinositol-4 kinase (PI4-kinase) that catalyzes the phosphorylation of phosphatidylinositol (PI) to phosphatidylinositol 4-phosphate (PI4P), a lipid that plays important roles in endocytosis, Golgi function, protein sorting and membrane trafficking and is required for prolonged survival of neurons. Besides, phosphorylation of phosphatidylinositol (PI) to phosphatidylinositol 4-phosphate (PI4P) is the first committed step in the generation of phosphatidylinositol 4,5-bisphosphate (PIP2), a precursor of the second messenger inositol 1,4,5-trisphosphate (InsP3).</text>
</comment>
<comment type="catalytic activity">
    <reaction evidence="5">
        <text>a 1,2-diacyl-sn-glycero-3-phospho-(1D-myo-inositol) + ATP = a 1,2-diacyl-sn-glycero-3-phospho-(1D-myo-inositol 4-phosphate) + ADP + H(+)</text>
        <dbReference type="Rhea" id="RHEA:19877"/>
        <dbReference type="ChEBI" id="CHEBI:15378"/>
        <dbReference type="ChEBI" id="CHEBI:30616"/>
        <dbReference type="ChEBI" id="CHEBI:57880"/>
        <dbReference type="ChEBI" id="CHEBI:58178"/>
        <dbReference type="ChEBI" id="CHEBI:456216"/>
        <dbReference type="EC" id="2.7.1.67"/>
    </reaction>
</comment>
<comment type="biophysicochemical properties">
    <kinetics>
        <KM>88 uM for ATP</KM>
        <KM>45 uM for PtdIns</KM>
    </kinetics>
</comment>
<comment type="subunit">
    <text evidence="1 7">Associates with the BLOC-1 and the AP-3 complexes; the BLOC-1 complex is required for optimal binding of PI4K2A to the AP-3 complex. Interacts with BLOC1S5 and DTNBP1 (PubMed:21998198). Interacts with FOS; this interaction may enhance phosphatidylinositol phosphorylation activity (By similarity). Interacts with ITCH (By similarity). Interacts with ATG9A (By similarity).</text>
</comment>
<comment type="subcellular location">
    <subcellularLocation>
        <location evidence="2">Golgi apparatus</location>
        <location evidence="2">trans-Golgi network membrane</location>
        <topology evidence="2">Lipid-anchor</topology>
    </subcellularLocation>
    <subcellularLocation>
        <location evidence="2">Membrane raft</location>
    </subcellularLocation>
    <subcellularLocation>
        <location evidence="7">Endosome</location>
    </subcellularLocation>
    <subcellularLocation>
        <location evidence="2">Endosome membrane</location>
    </subcellularLocation>
    <subcellularLocation>
        <location evidence="7">Cytoplasmic vesicle</location>
    </subcellularLocation>
    <subcellularLocation>
        <location evidence="1">Cell projection</location>
        <location evidence="1">Dendrite</location>
    </subcellularLocation>
    <subcellularLocation>
        <location evidence="1">Presynaptic cell membrane</location>
    </subcellularLocation>
    <subcellularLocation>
        <location evidence="1">Synapse</location>
        <location evidence="1">Synaptosome</location>
    </subcellularLocation>
    <subcellularLocation>
        <location evidence="1">Mitochondrion</location>
    </subcellularLocation>
    <subcellularLocation>
        <location evidence="5">Membrane</location>
        <topology evidence="5">Lipid-anchor</topology>
    </subcellularLocation>
    <subcellularLocation>
        <location evidence="2">Cell membrane</location>
    </subcellularLocation>
    <subcellularLocation>
        <location evidence="1">Perikaryon</location>
    </subcellularLocation>
    <subcellularLocation>
        <location evidence="1">Cell projection</location>
        <location evidence="1">Neuron projection</location>
    </subcellularLocation>
    <text evidence="1">Found in subdomains of the plasma membrane termed non-caveolar membrane rafts. Transported from neuronal cell body to neuron projections and neurite tips in a BLOC-1- and AP-3-complexes-dependent manner.</text>
</comment>
<comment type="tissue specificity">
    <text evidence="6">Detected in adult brain, especially in neurons in the cerebellum, brain cortex, dorsal root ganglion and spinal cord (at protein level).</text>
</comment>
<comment type="PTM">
    <text evidence="2">Ubiquitinated by ITCH; this does not lead to proteasomal degradation.</text>
</comment>
<comment type="PTM">
    <text evidence="2 5">Palmitoylated (PubMed:11244087). Palmitoylated by ZDHHC3 and ZDHHC7 in the CCPCC motif. Palmitoylation is cholesterol-dependent, and required for TGN localization (By similarity).</text>
</comment>
<comment type="similarity">
    <text evidence="8">Belongs to the PI3/PI4-kinase family. Type II PI4K subfamily.</text>
</comment>
<gene>
    <name type="primary">Pi4k2a</name>
    <name type="synonym">Pi4kii</name>
</gene>